<gene>
    <name evidence="1" type="primary">LRR1</name>
    <name evidence="3" type="ORF">OsI_04146</name>
</gene>
<protein>
    <recommendedName>
        <fullName evidence="1">Leucine-rich repeat protein 1</fullName>
        <shortName evidence="1">OsLRR1</shortName>
    </recommendedName>
</protein>
<evidence type="ECO:0000250" key="1">
    <source>
        <dbReference type="UniProtKB" id="Q5VQP7"/>
    </source>
</evidence>
<evidence type="ECO:0000255" key="2"/>
<evidence type="ECO:0000312" key="3">
    <source>
        <dbReference type="EMBL" id="EEC71674.1"/>
    </source>
</evidence>
<evidence type="ECO:0000312" key="4">
    <source>
        <dbReference type="Proteomes" id="UP000007015"/>
    </source>
</evidence>
<feature type="signal peptide" evidence="2">
    <location>
        <begin position="1"/>
        <end position="21"/>
    </location>
</feature>
<feature type="chain" id="PRO_5002864548" description="Leucine-rich repeat protein 1" evidence="2">
    <location>
        <begin position="22"/>
        <end position="213"/>
    </location>
</feature>
<feature type="repeat" description="LRR 1" evidence="2">
    <location>
        <begin position="90"/>
        <end position="113"/>
    </location>
</feature>
<feature type="repeat" description="LRR 2" evidence="2">
    <location>
        <begin position="115"/>
        <end position="137"/>
    </location>
</feature>
<feature type="repeat" description="LRR 3" evidence="2">
    <location>
        <begin position="138"/>
        <end position="161"/>
    </location>
</feature>
<feature type="repeat" description="LRR 4" evidence="2">
    <location>
        <begin position="163"/>
        <end position="186"/>
    </location>
</feature>
<sequence length="213" mass="22779">MGAGALGVVAMVAAAVVVAMAGANSEGDALSALRRSLRDPGGVLQSWDPTLVNPCTWFHVTCDRDNRVTRLDLGNLNLSGHLVPELGKLDHLQYLELYKNNIQGTIPSELGNLKNLISLDLYKNNISGTIPPTLGKLTSLVFLRLNGNRLTGPIPRELAGISSLKVVDVSSNDLCGTIPTSGPFEHIPLSNFEKNPRLEGPELQGLAVYDTNC</sequence>
<organism evidence="4">
    <name type="scientific">Oryza sativa subsp. indica</name>
    <name type="common">Rice</name>
    <dbReference type="NCBI Taxonomy" id="39946"/>
    <lineage>
        <taxon>Eukaryota</taxon>
        <taxon>Viridiplantae</taxon>
        <taxon>Streptophyta</taxon>
        <taxon>Embryophyta</taxon>
        <taxon>Tracheophyta</taxon>
        <taxon>Spermatophyta</taxon>
        <taxon>Magnoliopsida</taxon>
        <taxon>Liliopsida</taxon>
        <taxon>Poales</taxon>
        <taxon>Poaceae</taxon>
        <taxon>BOP clade</taxon>
        <taxon>Oryzoideae</taxon>
        <taxon>Oryzeae</taxon>
        <taxon>Oryzinae</taxon>
        <taxon>Oryza</taxon>
        <taxon>Oryza sativa</taxon>
    </lineage>
</organism>
<proteinExistence type="inferred from homology"/>
<accession>B8ABC2</accession>
<dbReference type="EMBL" id="CM000126">
    <property type="protein sequence ID" value="EEC71674.1"/>
    <property type="molecule type" value="Genomic_DNA"/>
</dbReference>
<dbReference type="SMR" id="B8ABC2"/>
<dbReference type="STRING" id="39946.B8ABC2"/>
<dbReference type="EnsemblPlants" id="BGIOSGA004654-TA">
    <property type="protein sequence ID" value="BGIOSGA004654-PA"/>
    <property type="gene ID" value="BGIOSGA004654"/>
</dbReference>
<dbReference type="EnsemblPlants" id="OsGoSa_01g0036560.01">
    <property type="protein sequence ID" value="OsGoSa_01g0036560.01"/>
    <property type="gene ID" value="OsGoSa_01g0036560"/>
</dbReference>
<dbReference type="EnsemblPlants" id="OsIR64_01g0036130.01">
    <property type="protein sequence ID" value="OsIR64_01g0036130.01"/>
    <property type="gene ID" value="OsIR64_01g0036130"/>
</dbReference>
<dbReference type="EnsemblPlants" id="OsKYG_01g0036330.01">
    <property type="protein sequence ID" value="OsKYG_01g0036330.01"/>
    <property type="gene ID" value="OsKYG_01g0036330"/>
</dbReference>
<dbReference type="EnsemblPlants" id="OsLaMu_01g0036430.01">
    <property type="protein sequence ID" value="OsLaMu_01g0036430.01"/>
    <property type="gene ID" value="OsLaMu_01g0036430"/>
</dbReference>
<dbReference type="EnsemblPlants" id="OsLima_01g0036270.01">
    <property type="protein sequence ID" value="OsLima_01g0036270.01"/>
    <property type="gene ID" value="OsLima_01g0036270"/>
</dbReference>
<dbReference type="EnsemblPlants" id="OsMH63_01G037110_01">
    <property type="protein sequence ID" value="OsMH63_01G037110_01"/>
    <property type="gene ID" value="OsMH63_01G037110"/>
</dbReference>
<dbReference type="EnsemblPlants" id="OsPr106_01g0036380.01">
    <property type="protein sequence ID" value="OsPr106_01g0036380.01"/>
    <property type="gene ID" value="OsPr106_01g0036380"/>
</dbReference>
<dbReference type="EnsemblPlants" id="OsZS97_01G036590_01">
    <property type="protein sequence ID" value="OsZS97_01G036590_01"/>
    <property type="gene ID" value="OsZS97_01G036590"/>
</dbReference>
<dbReference type="Gramene" id="BGIOSGA004654-TA">
    <property type="protein sequence ID" value="BGIOSGA004654-PA"/>
    <property type="gene ID" value="BGIOSGA004654"/>
</dbReference>
<dbReference type="Gramene" id="OsGoSa_01g0036560.01">
    <property type="protein sequence ID" value="OsGoSa_01g0036560.01"/>
    <property type="gene ID" value="OsGoSa_01g0036560"/>
</dbReference>
<dbReference type="Gramene" id="OsIR64_01g0036130.01">
    <property type="protein sequence ID" value="OsIR64_01g0036130.01"/>
    <property type="gene ID" value="OsIR64_01g0036130"/>
</dbReference>
<dbReference type="Gramene" id="OsKYG_01g0036330.01">
    <property type="protein sequence ID" value="OsKYG_01g0036330.01"/>
    <property type="gene ID" value="OsKYG_01g0036330"/>
</dbReference>
<dbReference type="Gramene" id="OsLaMu_01g0036430.01">
    <property type="protein sequence ID" value="OsLaMu_01g0036430.01"/>
    <property type="gene ID" value="OsLaMu_01g0036430"/>
</dbReference>
<dbReference type="Gramene" id="OsLima_01g0036270.01">
    <property type="protein sequence ID" value="OsLima_01g0036270.01"/>
    <property type="gene ID" value="OsLima_01g0036270"/>
</dbReference>
<dbReference type="Gramene" id="OsMH63_01G037110_01">
    <property type="protein sequence ID" value="OsMH63_01G037110_01"/>
    <property type="gene ID" value="OsMH63_01G037110"/>
</dbReference>
<dbReference type="Gramene" id="OsPr106_01g0036380.01">
    <property type="protein sequence ID" value="OsPr106_01g0036380.01"/>
    <property type="gene ID" value="OsPr106_01g0036380"/>
</dbReference>
<dbReference type="Gramene" id="OsZS97_01G036590_01">
    <property type="protein sequence ID" value="OsZS97_01G036590_01"/>
    <property type="gene ID" value="OsZS97_01G036590"/>
</dbReference>
<dbReference type="HOGENOM" id="CLU_000288_18_9_1"/>
<dbReference type="OMA" id="IQFTHAN"/>
<dbReference type="OrthoDB" id="1394818at2759"/>
<dbReference type="Proteomes" id="UP000007015">
    <property type="component" value="Chromosome 1"/>
</dbReference>
<dbReference type="GO" id="GO:0031901">
    <property type="term" value="C:early endosome membrane"/>
    <property type="evidence" value="ECO:0007669"/>
    <property type="project" value="UniProtKB-SubCell"/>
</dbReference>
<dbReference type="GO" id="GO:0031902">
    <property type="term" value="C:late endosome membrane"/>
    <property type="evidence" value="ECO:0007669"/>
    <property type="project" value="UniProtKB-SubCell"/>
</dbReference>
<dbReference type="GO" id="GO:0005886">
    <property type="term" value="C:plasma membrane"/>
    <property type="evidence" value="ECO:0007669"/>
    <property type="project" value="UniProtKB-SubCell"/>
</dbReference>
<dbReference type="GO" id="GO:0006952">
    <property type="term" value="P:defense response"/>
    <property type="evidence" value="ECO:0007669"/>
    <property type="project" value="UniProtKB-KW"/>
</dbReference>
<dbReference type="FunFam" id="3.80.10.10:FF:000024">
    <property type="entry name" value="Somatic embryogenesis receptor kinase 1"/>
    <property type="match status" value="1"/>
</dbReference>
<dbReference type="Gene3D" id="3.80.10.10">
    <property type="entry name" value="Ribonuclease Inhibitor"/>
    <property type="match status" value="1"/>
</dbReference>
<dbReference type="InterPro" id="IPR032675">
    <property type="entry name" value="LRR_dom_sf"/>
</dbReference>
<dbReference type="InterPro" id="IPR013210">
    <property type="entry name" value="LRR_N_plant-typ"/>
</dbReference>
<dbReference type="InterPro" id="IPR055414">
    <property type="entry name" value="LRR_R13L4/SHOC2-like"/>
</dbReference>
<dbReference type="PANTHER" id="PTHR47988">
    <property type="entry name" value="SOMATIC EMBRYOGENESIS RECEPTOR KINASE 1"/>
    <property type="match status" value="1"/>
</dbReference>
<dbReference type="Pfam" id="PF23598">
    <property type="entry name" value="LRR_14"/>
    <property type="match status" value="1"/>
</dbReference>
<dbReference type="Pfam" id="PF08263">
    <property type="entry name" value="LRRNT_2"/>
    <property type="match status" value="1"/>
</dbReference>
<dbReference type="SUPFAM" id="SSF52058">
    <property type="entry name" value="L domain-like"/>
    <property type="match status" value="1"/>
</dbReference>
<reference evidence="3 4" key="1">
    <citation type="journal article" date="2005" name="PLoS Biol.">
        <title>The genomes of Oryza sativa: a history of duplications.</title>
        <authorList>
            <person name="Yu J."/>
            <person name="Wang J."/>
            <person name="Lin W."/>
            <person name="Li S."/>
            <person name="Li H."/>
            <person name="Zhou J."/>
            <person name="Ni P."/>
            <person name="Dong W."/>
            <person name="Hu S."/>
            <person name="Zeng C."/>
            <person name="Zhang J."/>
            <person name="Zhang Y."/>
            <person name="Li R."/>
            <person name="Xu Z."/>
            <person name="Li S."/>
            <person name="Li X."/>
            <person name="Zheng H."/>
            <person name="Cong L."/>
            <person name="Lin L."/>
            <person name="Yin J."/>
            <person name="Geng J."/>
            <person name="Li G."/>
            <person name="Shi J."/>
            <person name="Liu J."/>
            <person name="Lv H."/>
            <person name="Li J."/>
            <person name="Wang J."/>
            <person name="Deng Y."/>
            <person name="Ran L."/>
            <person name="Shi X."/>
            <person name="Wang X."/>
            <person name="Wu Q."/>
            <person name="Li C."/>
            <person name="Ren X."/>
            <person name="Wang J."/>
            <person name="Wang X."/>
            <person name="Li D."/>
            <person name="Liu D."/>
            <person name="Zhang X."/>
            <person name="Ji Z."/>
            <person name="Zhao W."/>
            <person name="Sun Y."/>
            <person name="Zhang Z."/>
            <person name="Bao J."/>
            <person name="Han Y."/>
            <person name="Dong L."/>
            <person name="Ji J."/>
            <person name="Chen P."/>
            <person name="Wu S."/>
            <person name="Liu J."/>
            <person name="Xiao Y."/>
            <person name="Bu D."/>
            <person name="Tan J."/>
            <person name="Yang L."/>
            <person name="Ye C."/>
            <person name="Zhang J."/>
            <person name="Xu J."/>
            <person name="Zhou Y."/>
            <person name="Yu Y."/>
            <person name="Zhang B."/>
            <person name="Zhuang S."/>
            <person name="Wei H."/>
            <person name="Liu B."/>
            <person name="Lei M."/>
            <person name="Yu H."/>
            <person name="Li Y."/>
            <person name="Xu H."/>
            <person name="Wei S."/>
            <person name="He X."/>
            <person name="Fang L."/>
            <person name="Zhang Z."/>
            <person name="Zhang Y."/>
            <person name="Huang X."/>
            <person name="Su Z."/>
            <person name="Tong W."/>
            <person name="Li J."/>
            <person name="Tong Z."/>
            <person name="Li S."/>
            <person name="Ye J."/>
            <person name="Wang L."/>
            <person name="Fang L."/>
            <person name="Lei T."/>
            <person name="Chen C.-S."/>
            <person name="Chen H.-C."/>
            <person name="Xu Z."/>
            <person name="Li H."/>
            <person name="Huang H."/>
            <person name="Zhang F."/>
            <person name="Xu H."/>
            <person name="Li N."/>
            <person name="Zhao C."/>
            <person name="Li S."/>
            <person name="Dong L."/>
            <person name="Huang Y."/>
            <person name="Li L."/>
            <person name="Xi Y."/>
            <person name="Qi Q."/>
            <person name="Li W."/>
            <person name="Zhang B."/>
            <person name="Hu W."/>
            <person name="Zhang Y."/>
            <person name="Tian X."/>
            <person name="Jiao Y."/>
            <person name="Liang X."/>
            <person name="Jin J."/>
            <person name="Gao L."/>
            <person name="Zheng W."/>
            <person name="Hao B."/>
            <person name="Liu S.-M."/>
            <person name="Wang W."/>
            <person name="Yuan L."/>
            <person name="Cao M."/>
            <person name="McDermott J."/>
            <person name="Samudrala R."/>
            <person name="Wang J."/>
            <person name="Wong G.K.-S."/>
            <person name="Yang H."/>
        </authorList>
    </citation>
    <scope>NUCLEOTIDE SEQUENCE [LARGE SCALE GENOMIC DNA]</scope>
    <source>
        <strain>cv. 93-11</strain>
    </source>
</reference>
<keyword id="KW-1003">Cell membrane</keyword>
<keyword id="KW-0967">Endosome</keyword>
<keyword id="KW-0433">Leucine-rich repeat</keyword>
<keyword id="KW-0472">Membrane</keyword>
<keyword id="KW-0611">Plant defense</keyword>
<keyword id="KW-1185">Reference proteome</keyword>
<keyword id="KW-0677">Repeat</keyword>
<keyword id="KW-0732">Signal</keyword>
<comment type="function">
    <text evidence="1">Involved in plant defense response.</text>
</comment>
<comment type="subunit">
    <text evidence="1">Interacts with HIR1.</text>
</comment>
<comment type="subcellular location">
    <subcellularLocation>
        <location evidence="1">Early endosome membrane</location>
        <topology evidence="1">Peripheral membrane protein</topology>
    </subcellularLocation>
    <subcellularLocation>
        <location evidence="1">Late endosome membrane</location>
        <topology evidence="1">Peripheral membrane protein</topology>
    </subcellularLocation>
    <subcellularLocation>
        <location evidence="1">Cell membrane</location>
        <topology evidence="1">Peripheral membrane protein</topology>
    </subcellularLocation>
</comment>
<name>LRR1_ORYSI</name>